<feature type="propeptide" id="PRO_0000029261" evidence="1">
    <location>
        <begin position="1"/>
        <end position="21"/>
    </location>
</feature>
<feature type="chain" id="PRO_0000029262" description="Amidophosphoribosyltransferase">
    <location>
        <begin position="22"/>
        <end position="496"/>
    </location>
</feature>
<feature type="domain" description="Glutamine amidotransferase type-2" evidence="2">
    <location>
        <begin position="22"/>
        <end position="241"/>
    </location>
</feature>
<feature type="active site" description="Nucleophile" evidence="2">
    <location>
        <position position="22"/>
    </location>
</feature>
<feature type="sequence conflict" description="In Ref. 1; AAB06461." evidence="3" ref="1">
    <original>RD</original>
    <variation>SH</variation>
    <location>
        <begin position="193"/>
        <end position="194"/>
    </location>
</feature>
<feature type="sequence conflict" description="In Ref. 1; AAB06461." evidence="3" ref="1">
    <original>P</original>
    <variation>S</variation>
    <location>
        <position position="312"/>
    </location>
</feature>
<feature type="sequence conflict" description="In Ref. 1; AAB06461." evidence="3" ref="1">
    <original>L</original>
    <variation>G</variation>
    <location>
        <position position="315"/>
    </location>
</feature>
<feature type="sequence conflict" description="In Ref. 1; AAB06461." evidence="3" ref="1">
    <original>Y</original>
    <variation>YEY</variation>
    <location>
        <position position="327"/>
    </location>
</feature>
<feature type="sequence conflict" description="In Ref. 1; AAB06461." evidence="3" ref="1">
    <original>P</original>
    <variation>R</variation>
    <location>
        <position position="407"/>
    </location>
</feature>
<feature type="sequence conflict" description="In Ref. 1; AAB06461." evidence="3" ref="1">
    <original>IDTPDA</original>
    <variation>SIRPTP</variation>
    <location>
        <begin position="412"/>
        <end position="417"/>
    </location>
</feature>
<keyword id="KW-0315">Glutamine amidotransferase</keyword>
<keyword id="KW-0328">Glycosyltransferase</keyword>
<keyword id="KW-0658">Purine biosynthesis</keyword>
<keyword id="KW-1185">Reference proteome</keyword>
<keyword id="KW-0808">Transferase</keyword>
<sequence>MNQSHSFPTDDPLDGDTLHEECGVFGILGHPDAAALTALGLHALQHRGQEAAGIVSFDGKRFYQERHMGLVGDHYTNPMTLARLPGSISIGHTRYSTTGEVAMRNVQPLFAELEEGGIAIAHNGNFTNGLTLRRQIIATGAICQSTSDTEVVLHLIARSRHASTSDRFIDAIRQMEGGYSMLAMTRTKLIAARDPTGIRPLVMGELDGKPIFCSETCALDIIGAKFIRDVENGEVIICEIQPDGSISIDARKPSKPQPERLCLFEYVYFARPDSVVGGRNVYTTRKNMGMNLAKESPVDADVVVPVPDGGTPAALGYAQESGIPFEYGIIRNHYVGRTFIEPTQQIRAFGVKLKHSANRAMIEGKRVVLVDDSIVRGTTSLKIVQMIREAGAREVHIRVASPMIFFPDFYGIDTPDADKLLANQYADVEAMAKYIGADSLAFLSINGLYRAVGGEDRNPARPQFTDHYFTGDYPTRLLDKNGESMGNKLSMLASNG</sequence>
<protein>
    <recommendedName>
        <fullName evidence="2">Amidophosphoribosyltransferase</fullName>
        <shortName evidence="2">ATase</shortName>
        <ecNumber evidence="2">2.4.2.14</ecNumber>
    </recommendedName>
    <alternativeName>
        <fullName evidence="2">Glutamine phosphoribosylpyrophosphate amidotransferase</fullName>
        <shortName evidence="2">GPATase</shortName>
    </alternativeName>
</protein>
<organism>
    <name type="scientific">Rhizobium etli (strain ATCC 51251 / DSM 11541 / JCM 21823 / NBRC 15573 / CFN 42)</name>
    <dbReference type="NCBI Taxonomy" id="347834"/>
    <lineage>
        <taxon>Bacteria</taxon>
        <taxon>Pseudomonadati</taxon>
        <taxon>Pseudomonadota</taxon>
        <taxon>Alphaproteobacteria</taxon>
        <taxon>Hyphomicrobiales</taxon>
        <taxon>Rhizobiaceae</taxon>
        <taxon>Rhizobium/Agrobacterium group</taxon>
        <taxon>Rhizobium</taxon>
    </lineage>
</organism>
<dbReference type="EC" id="2.4.2.14" evidence="2"/>
<dbReference type="EMBL" id="U65392">
    <property type="protein sequence ID" value="AAB06461.1"/>
    <property type="molecule type" value="Genomic_DNA"/>
</dbReference>
<dbReference type="EMBL" id="CP000133">
    <property type="protein sequence ID" value="ABC90231.1"/>
    <property type="molecule type" value="Genomic_DNA"/>
</dbReference>
<dbReference type="RefSeq" id="WP_011424763.1">
    <property type="nucleotide sequence ID" value="NC_007761.1"/>
</dbReference>
<dbReference type="SMR" id="P77935"/>
<dbReference type="MEROPS" id="C44.001"/>
<dbReference type="KEGG" id="ret:RHE_CH01428"/>
<dbReference type="eggNOG" id="COG0034">
    <property type="taxonomic scope" value="Bacteria"/>
</dbReference>
<dbReference type="HOGENOM" id="CLU_022389_3_3_5"/>
<dbReference type="OrthoDB" id="9801213at2"/>
<dbReference type="UniPathway" id="UPA00074">
    <property type="reaction ID" value="UER00124"/>
</dbReference>
<dbReference type="Proteomes" id="UP000001936">
    <property type="component" value="Chromosome"/>
</dbReference>
<dbReference type="GO" id="GO:0004044">
    <property type="term" value="F:amidophosphoribosyltransferase activity"/>
    <property type="evidence" value="ECO:0007669"/>
    <property type="project" value="UniProtKB-UniRule"/>
</dbReference>
<dbReference type="GO" id="GO:0006189">
    <property type="term" value="P:'de novo' IMP biosynthetic process"/>
    <property type="evidence" value="ECO:0007669"/>
    <property type="project" value="UniProtKB-UniRule"/>
</dbReference>
<dbReference type="GO" id="GO:0009113">
    <property type="term" value="P:purine nucleobase biosynthetic process"/>
    <property type="evidence" value="ECO:0007669"/>
    <property type="project" value="InterPro"/>
</dbReference>
<dbReference type="CDD" id="cd00715">
    <property type="entry name" value="GPATase_N"/>
    <property type="match status" value="1"/>
</dbReference>
<dbReference type="CDD" id="cd06223">
    <property type="entry name" value="PRTases_typeI"/>
    <property type="match status" value="1"/>
</dbReference>
<dbReference type="Gene3D" id="3.40.50.2020">
    <property type="match status" value="1"/>
</dbReference>
<dbReference type="Gene3D" id="3.60.20.10">
    <property type="entry name" value="Glutamine Phosphoribosylpyrophosphate, subunit 1, domain 1"/>
    <property type="match status" value="1"/>
</dbReference>
<dbReference type="HAMAP" id="MF_01931">
    <property type="entry name" value="PurF"/>
    <property type="match status" value="1"/>
</dbReference>
<dbReference type="InterPro" id="IPR017932">
    <property type="entry name" value="GATase_2_dom"/>
</dbReference>
<dbReference type="InterPro" id="IPR029055">
    <property type="entry name" value="Ntn_hydrolases_N"/>
</dbReference>
<dbReference type="InterPro" id="IPR000836">
    <property type="entry name" value="PRibTrfase_dom"/>
</dbReference>
<dbReference type="InterPro" id="IPR029057">
    <property type="entry name" value="PRTase-like"/>
</dbReference>
<dbReference type="InterPro" id="IPR005854">
    <property type="entry name" value="PurF"/>
</dbReference>
<dbReference type="InterPro" id="IPR035584">
    <property type="entry name" value="PurF_N"/>
</dbReference>
<dbReference type="NCBIfam" id="TIGR01134">
    <property type="entry name" value="purF"/>
    <property type="match status" value="1"/>
</dbReference>
<dbReference type="PANTHER" id="PTHR11907">
    <property type="entry name" value="AMIDOPHOSPHORIBOSYLTRANSFERASE"/>
    <property type="match status" value="1"/>
</dbReference>
<dbReference type="Pfam" id="PF13537">
    <property type="entry name" value="GATase_7"/>
    <property type="match status" value="1"/>
</dbReference>
<dbReference type="Pfam" id="PF00156">
    <property type="entry name" value="Pribosyltran"/>
    <property type="match status" value="1"/>
</dbReference>
<dbReference type="PIRSF" id="PIRSF000485">
    <property type="entry name" value="Amd_phspho_trans"/>
    <property type="match status" value="1"/>
</dbReference>
<dbReference type="SUPFAM" id="SSF56235">
    <property type="entry name" value="N-terminal nucleophile aminohydrolases (Ntn hydrolases)"/>
    <property type="match status" value="1"/>
</dbReference>
<dbReference type="SUPFAM" id="SSF53271">
    <property type="entry name" value="PRTase-like"/>
    <property type="match status" value="1"/>
</dbReference>
<dbReference type="PROSITE" id="PS51278">
    <property type="entry name" value="GATASE_TYPE_2"/>
    <property type="match status" value="1"/>
</dbReference>
<dbReference type="PROSITE" id="PS00103">
    <property type="entry name" value="PUR_PYR_PR_TRANSFER"/>
    <property type="match status" value="1"/>
</dbReference>
<name>PUR1_RHIEC</name>
<proteinExistence type="inferred from homology"/>
<gene>
    <name evidence="2" type="primary">purF</name>
    <name type="ordered locus">RHE_CH01428</name>
</gene>
<comment type="function">
    <text evidence="2">Catalyzes the formation of phosphoribosylamine from phosphoribosylpyrophosphate (PRPP) and glutamine.</text>
</comment>
<comment type="catalytic activity">
    <reaction evidence="2">
        <text>5-phospho-beta-D-ribosylamine + L-glutamate + diphosphate = 5-phospho-alpha-D-ribose 1-diphosphate + L-glutamine + H2O</text>
        <dbReference type="Rhea" id="RHEA:14905"/>
        <dbReference type="ChEBI" id="CHEBI:15377"/>
        <dbReference type="ChEBI" id="CHEBI:29985"/>
        <dbReference type="ChEBI" id="CHEBI:33019"/>
        <dbReference type="ChEBI" id="CHEBI:58017"/>
        <dbReference type="ChEBI" id="CHEBI:58359"/>
        <dbReference type="ChEBI" id="CHEBI:58681"/>
        <dbReference type="EC" id="2.4.2.14"/>
    </reaction>
</comment>
<comment type="pathway">
    <text evidence="2">Purine metabolism; IMP biosynthesis via de novo pathway; N(1)-(5-phospho-D-ribosyl)glycinamide from 5-phospho-alpha-D-ribose 1-diphosphate: step 1/2.</text>
</comment>
<comment type="similarity">
    <text evidence="2">In the C-terminal section; belongs to the purine/pyrimidine phosphoribosyltransferase family.</text>
</comment>
<reference key="1">
    <citation type="submission" date="1996-08" db="EMBL/GenBank/DDBJ databases">
        <authorList>
            <person name="Soberon M."/>
            <person name="Lopez O."/>
            <person name="Girard L."/>
            <person name="Miranda J."/>
            <person name="Morera C."/>
        </authorList>
    </citation>
    <scope>NUCLEOTIDE SEQUENCE [GENOMIC DNA]</scope>
    <source>
        <strain>CE3</strain>
    </source>
</reference>
<reference key="2">
    <citation type="journal article" date="2006" name="Proc. Natl. Acad. Sci. U.S.A.">
        <title>The partitioned Rhizobium etli genome: genetic and metabolic redundancy in seven interacting replicons.</title>
        <authorList>
            <person name="Gonzalez V."/>
            <person name="Santamaria R.I."/>
            <person name="Bustos P."/>
            <person name="Hernandez-Gonzalez I."/>
            <person name="Medrano-Soto A."/>
            <person name="Moreno-Hagelsieb G."/>
            <person name="Janga S.C."/>
            <person name="Ramirez M.A."/>
            <person name="Jimenez-Jacinto V."/>
            <person name="Collado-Vides J."/>
            <person name="Davila G."/>
        </authorList>
    </citation>
    <scope>NUCLEOTIDE SEQUENCE [LARGE SCALE GENOMIC DNA]</scope>
    <source>
        <strain>ATCC 51251 / DSM 11541 / JCM 21823 / NBRC 15573 / CFN 42</strain>
    </source>
</reference>
<accession>P77935</accession>
<accession>Q2KAA5</accession>
<evidence type="ECO:0000250" key="1"/>
<evidence type="ECO:0000255" key="2">
    <source>
        <dbReference type="HAMAP-Rule" id="MF_01931"/>
    </source>
</evidence>
<evidence type="ECO:0000305" key="3"/>